<protein>
    <recommendedName>
        <fullName>Protein transport protein BOS1</fullName>
    </recommendedName>
</protein>
<gene>
    <name type="primary">BOS1</name>
    <name type="ordered locus">KLLA0D05775g</name>
</gene>
<dbReference type="EMBL" id="CR382124">
    <property type="protein sequence ID" value="CAH00415.1"/>
    <property type="molecule type" value="Genomic_DNA"/>
</dbReference>
<dbReference type="RefSeq" id="XP_453319.1">
    <property type="nucleotide sequence ID" value="XM_453319.1"/>
</dbReference>
<dbReference type="SMR" id="Q6CRX0"/>
<dbReference type="FunCoup" id="Q6CRX0">
    <property type="interactions" value="77"/>
</dbReference>
<dbReference type="STRING" id="284590.Q6CRX0"/>
<dbReference type="PaxDb" id="284590-Q6CRX0"/>
<dbReference type="KEGG" id="kla:KLLA0_D05775g"/>
<dbReference type="eggNOG" id="KOG3251">
    <property type="taxonomic scope" value="Eukaryota"/>
</dbReference>
<dbReference type="HOGENOM" id="CLU_078260_1_0_1"/>
<dbReference type="InParanoid" id="Q6CRX0"/>
<dbReference type="OMA" id="FCWLVIH"/>
<dbReference type="Proteomes" id="UP000000598">
    <property type="component" value="Chromosome D"/>
</dbReference>
<dbReference type="GO" id="GO:0005789">
    <property type="term" value="C:endoplasmic reticulum membrane"/>
    <property type="evidence" value="ECO:0007669"/>
    <property type="project" value="UniProtKB-SubCell"/>
</dbReference>
<dbReference type="GO" id="GO:0012507">
    <property type="term" value="C:ER to Golgi transport vesicle membrane"/>
    <property type="evidence" value="ECO:0007669"/>
    <property type="project" value="TreeGrafter"/>
</dbReference>
<dbReference type="GO" id="GO:0000139">
    <property type="term" value="C:Golgi membrane"/>
    <property type="evidence" value="ECO:0007669"/>
    <property type="project" value="UniProtKB-SubCell"/>
</dbReference>
<dbReference type="GO" id="GO:0031902">
    <property type="term" value="C:late endosome membrane"/>
    <property type="evidence" value="ECO:0007669"/>
    <property type="project" value="TreeGrafter"/>
</dbReference>
<dbReference type="GO" id="GO:0031201">
    <property type="term" value="C:SNARE complex"/>
    <property type="evidence" value="ECO:0007669"/>
    <property type="project" value="TreeGrafter"/>
</dbReference>
<dbReference type="GO" id="GO:0005484">
    <property type="term" value="F:SNAP receptor activity"/>
    <property type="evidence" value="ECO:0007669"/>
    <property type="project" value="InterPro"/>
</dbReference>
<dbReference type="GO" id="GO:0000149">
    <property type="term" value="F:SNARE binding"/>
    <property type="evidence" value="ECO:0007669"/>
    <property type="project" value="TreeGrafter"/>
</dbReference>
<dbReference type="GO" id="GO:0006888">
    <property type="term" value="P:endoplasmic reticulum to Golgi vesicle-mediated transport"/>
    <property type="evidence" value="ECO:0007669"/>
    <property type="project" value="TreeGrafter"/>
</dbReference>
<dbReference type="GO" id="GO:0015031">
    <property type="term" value="P:protein transport"/>
    <property type="evidence" value="ECO:0007669"/>
    <property type="project" value="UniProtKB-KW"/>
</dbReference>
<dbReference type="GO" id="GO:0006906">
    <property type="term" value="P:vesicle fusion"/>
    <property type="evidence" value="ECO:0007669"/>
    <property type="project" value="TreeGrafter"/>
</dbReference>
<dbReference type="InterPro" id="IPR027027">
    <property type="entry name" value="GOSR2/Membrin/Bos1"/>
</dbReference>
<dbReference type="PANTHER" id="PTHR21230:SF1">
    <property type="entry name" value="GOLGI SNAP RECEPTOR COMPLEX MEMBER 2"/>
    <property type="match status" value="1"/>
</dbReference>
<dbReference type="PANTHER" id="PTHR21230">
    <property type="entry name" value="VESICLE TRANSPORT V-SNARE PROTEIN VTI1-RELATED"/>
    <property type="match status" value="1"/>
</dbReference>
<dbReference type="Pfam" id="PF12352">
    <property type="entry name" value="V-SNARE_C"/>
    <property type="match status" value="1"/>
</dbReference>
<dbReference type="PIRSF" id="PIRSF028865">
    <property type="entry name" value="Membrin-2"/>
    <property type="match status" value="1"/>
</dbReference>
<keyword id="KW-0256">Endoplasmic reticulum</keyword>
<keyword id="KW-0931">ER-Golgi transport</keyword>
<keyword id="KW-0333">Golgi apparatus</keyword>
<keyword id="KW-0472">Membrane</keyword>
<keyword id="KW-0653">Protein transport</keyword>
<keyword id="KW-1185">Reference proteome</keyword>
<keyword id="KW-0812">Transmembrane</keyword>
<keyword id="KW-1133">Transmembrane helix</keyword>
<keyword id="KW-0813">Transport</keyword>
<organism>
    <name type="scientific">Kluyveromyces lactis (strain ATCC 8585 / CBS 2359 / DSM 70799 / NBRC 1267 / NRRL Y-1140 / WM37)</name>
    <name type="common">Yeast</name>
    <name type="synonym">Candida sphaerica</name>
    <dbReference type="NCBI Taxonomy" id="284590"/>
    <lineage>
        <taxon>Eukaryota</taxon>
        <taxon>Fungi</taxon>
        <taxon>Dikarya</taxon>
        <taxon>Ascomycota</taxon>
        <taxon>Saccharomycotina</taxon>
        <taxon>Saccharomycetes</taxon>
        <taxon>Saccharomycetales</taxon>
        <taxon>Saccharomycetaceae</taxon>
        <taxon>Kluyveromyces</taxon>
    </lineage>
</organism>
<reference key="1">
    <citation type="journal article" date="2004" name="Nature">
        <title>Genome evolution in yeasts.</title>
        <authorList>
            <person name="Dujon B."/>
            <person name="Sherman D."/>
            <person name="Fischer G."/>
            <person name="Durrens P."/>
            <person name="Casaregola S."/>
            <person name="Lafontaine I."/>
            <person name="de Montigny J."/>
            <person name="Marck C."/>
            <person name="Neuveglise C."/>
            <person name="Talla E."/>
            <person name="Goffard N."/>
            <person name="Frangeul L."/>
            <person name="Aigle M."/>
            <person name="Anthouard V."/>
            <person name="Babour A."/>
            <person name="Barbe V."/>
            <person name="Barnay S."/>
            <person name="Blanchin S."/>
            <person name="Beckerich J.-M."/>
            <person name="Beyne E."/>
            <person name="Bleykasten C."/>
            <person name="Boisrame A."/>
            <person name="Boyer J."/>
            <person name="Cattolico L."/>
            <person name="Confanioleri F."/>
            <person name="de Daruvar A."/>
            <person name="Despons L."/>
            <person name="Fabre E."/>
            <person name="Fairhead C."/>
            <person name="Ferry-Dumazet H."/>
            <person name="Groppi A."/>
            <person name="Hantraye F."/>
            <person name="Hennequin C."/>
            <person name="Jauniaux N."/>
            <person name="Joyet P."/>
            <person name="Kachouri R."/>
            <person name="Kerrest A."/>
            <person name="Koszul R."/>
            <person name="Lemaire M."/>
            <person name="Lesur I."/>
            <person name="Ma L."/>
            <person name="Muller H."/>
            <person name="Nicaud J.-M."/>
            <person name="Nikolski M."/>
            <person name="Oztas S."/>
            <person name="Ozier-Kalogeropoulos O."/>
            <person name="Pellenz S."/>
            <person name="Potier S."/>
            <person name="Richard G.-F."/>
            <person name="Straub M.-L."/>
            <person name="Suleau A."/>
            <person name="Swennen D."/>
            <person name="Tekaia F."/>
            <person name="Wesolowski-Louvel M."/>
            <person name="Westhof E."/>
            <person name="Wirth B."/>
            <person name="Zeniou-Meyer M."/>
            <person name="Zivanovic Y."/>
            <person name="Bolotin-Fukuhara M."/>
            <person name="Thierry A."/>
            <person name="Bouchier C."/>
            <person name="Caudron B."/>
            <person name="Scarpelli C."/>
            <person name="Gaillardin C."/>
            <person name="Weissenbach J."/>
            <person name="Wincker P."/>
            <person name="Souciet J.-L."/>
        </authorList>
    </citation>
    <scope>NUCLEOTIDE SEQUENCE [LARGE SCALE GENOMIC DNA]</scope>
    <source>
        <strain>ATCC 8585 / CBS 2359 / DSM 70799 / NBRC 1267 / NRRL Y-1140 / WM37</strain>
    </source>
</reference>
<evidence type="ECO:0000250" key="1"/>
<evidence type="ECO:0000255" key="2"/>
<evidence type="ECO:0000305" key="3"/>
<sequence length="248" mass="28721">MNALYNHAIKQRSLLNKDLGKFEKELVTAPISLQGAIATTLVSFEKTLHQYKEQYKQYQINSSDDNDETKLKYETRLQTLTQDYEDAKEKFTELKQKYSEINARDQLFNQQASMVEETVMNKRNINAPPQTSFGIGALDQNSERMTINSAAGLPLYEGLRKENSIFERGNAHLDRILQMGQESLEDIMEQNRVLQRLQSQMTKSLHVLGVSNETIEKINKRLFKDKLIFYIGLLLLILGIYFVLKWFG</sequence>
<proteinExistence type="inferred from homology"/>
<feature type="chain" id="PRO_0000207554" description="Protein transport protein BOS1">
    <location>
        <begin position="1"/>
        <end position="248"/>
    </location>
</feature>
<feature type="topological domain" description="Cytoplasmic" evidence="2">
    <location>
        <begin position="1"/>
        <end position="226"/>
    </location>
</feature>
<feature type="transmembrane region" description="Helical; Anchor for type IV membrane protein" evidence="2">
    <location>
        <begin position="227"/>
        <end position="247"/>
    </location>
</feature>
<feature type="topological domain" description="Vesicular" evidence="2">
    <location>
        <position position="248"/>
    </location>
</feature>
<comment type="function">
    <text evidence="1">SNARE required for protein transport between the ER and the Golgi complex.</text>
</comment>
<comment type="subcellular location">
    <subcellularLocation>
        <location evidence="1">Golgi apparatus membrane</location>
        <topology evidence="1">Single-pass type IV membrane protein</topology>
    </subcellularLocation>
    <subcellularLocation>
        <location evidence="1">Endoplasmic reticulum membrane</location>
        <topology evidence="1">Single-pass type IV membrane protein</topology>
    </subcellularLocation>
</comment>
<comment type="similarity">
    <text evidence="3">Belongs to the BOS1 family.</text>
</comment>
<name>BOS1_KLULA</name>
<accession>Q6CRX0</accession>